<protein>
    <recommendedName>
        <fullName evidence="4">LRP chaperone MESD</fullName>
    </recommendedName>
    <alternativeName>
        <fullName>LDLR chaperone MESD</fullName>
    </alternativeName>
    <alternativeName>
        <fullName>Mesoderm development candidate 2</fullName>
    </alternativeName>
    <alternativeName>
        <fullName>Mesoderm development protein</fullName>
    </alternativeName>
</protein>
<sequence>MAASSWARKAVVVLCASDLLLLLLLLPPPGSCAAEASPGTPDESTPPPRKKKKDIRDYNDADMARLLEQWEKDDDIEEGDLPEHKRPSAPVDFSKIDPSKPESILKMTKKGKTLMMFVTVSGSPTEKETEEITSLWQGSLFNANYDVQRFIVGSDRAIFMLRDGNYAWEIKDFLVGQDRCADVTLEGQVYPGKGGGSKEKNKTKQDKGKKKKEGDLKSRSSKEDNRARNKREDL</sequence>
<feature type="signal peptide" evidence="2">
    <location>
        <begin position="1"/>
        <end position="33"/>
    </location>
</feature>
<feature type="chain" id="PRO_0000240319" description="LRP chaperone MESD">
    <location>
        <begin position="34"/>
        <end position="234"/>
    </location>
</feature>
<feature type="region of interest" description="Chaperone domain" evidence="1">
    <location>
        <begin position="1"/>
        <end position="164"/>
    </location>
</feature>
<feature type="region of interest" description="Disordered" evidence="3">
    <location>
        <begin position="31"/>
        <end position="58"/>
    </location>
</feature>
<feature type="region of interest" description="Disordered" evidence="3">
    <location>
        <begin position="71"/>
        <end position="93"/>
    </location>
</feature>
<feature type="region of interest" description="Escort domain" evidence="1">
    <location>
        <begin position="165"/>
        <end position="204"/>
    </location>
</feature>
<feature type="region of interest" description="Disordered" evidence="3">
    <location>
        <begin position="187"/>
        <end position="234"/>
    </location>
</feature>
<feature type="short sequence motif" description="Prevents secretion from ER">
    <location>
        <begin position="231"/>
        <end position="234"/>
    </location>
</feature>
<feature type="compositionally biased region" description="Acidic residues" evidence="3">
    <location>
        <begin position="71"/>
        <end position="80"/>
    </location>
</feature>
<feature type="compositionally biased region" description="Basic and acidic residues" evidence="3">
    <location>
        <begin position="196"/>
        <end position="234"/>
    </location>
</feature>
<feature type="glycosylation site" description="N-linked (GlcNAc...) asparagine" evidence="2">
    <location>
        <position position="201"/>
    </location>
</feature>
<organism>
    <name type="scientific">Pongo abelii</name>
    <name type="common">Sumatran orangutan</name>
    <name type="synonym">Pongo pygmaeus abelii</name>
    <dbReference type="NCBI Taxonomy" id="9601"/>
    <lineage>
        <taxon>Eukaryota</taxon>
        <taxon>Metazoa</taxon>
        <taxon>Chordata</taxon>
        <taxon>Craniata</taxon>
        <taxon>Vertebrata</taxon>
        <taxon>Euteleostomi</taxon>
        <taxon>Mammalia</taxon>
        <taxon>Eutheria</taxon>
        <taxon>Euarchontoglires</taxon>
        <taxon>Primates</taxon>
        <taxon>Haplorrhini</taxon>
        <taxon>Catarrhini</taxon>
        <taxon>Hominidae</taxon>
        <taxon>Pongo</taxon>
    </lineage>
</organism>
<evidence type="ECO:0000250" key="1">
    <source>
        <dbReference type="UniProtKB" id="Q9ERE7"/>
    </source>
</evidence>
<evidence type="ECO:0000255" key="2"/>
<evidence type="ECO:0000256" key="3">
    <source>
        <dbReference type="SAM" id="MobiDB-lite"/>
    </source>
</evidence>
<evidence type="ECO:0000305" key="4"/>
<keyword id="KW-0143">Chaperone</keyword>
<keyword id="KW-0256">Endoplasmic reticulum</keyword>
<keyword id="KW-0325">Glycoprotein</keyword>
<keyword id="KW-1185">Reference proteome</keyword>
<keyword id="KW-0732">Signal</keyword>
<keyword id="KW-0879">Wnt signaling pathway</keyword>
<reference key="1">
    <citation type="submission" date="2004-11" db="EMBL/GenBank/DDBJ databases">
        <authorList>
            <consortium name="The German cDNA consortium"/>
        </authorList>
    </citation>
    <scope>NUCLEOTIDE SEQUENCE [LARGE SCALE MRNA]</scope>
    <source>
        <tissue>Brain cortex</tissue>
    </source>
</reference>
<accession>Q5R6F1</accession>
<name>MESD_PONAB</name>
<proteinExistence type="evidence at transcript level"/>
<comment type="function">
    <text evidence="1">Chaperone specifically assisting the folding of beta-propeller/EGF modules within the family of low-density lipoprotein receptors (LDLRs). Acts as a modulator of the Wnt pathway through chaperoning the coreceptors of the canonical Wnt pathway, LRP5 and LRP6, to the plasma membrane. Essential for specification of embryonic polarity and mesoderm induction. Plays an essential role in neuromuscular junction (NMJ) formation by promoting cell-surface expression of LRP4. May regulate phagocytosis of apoptotic retinal pigment epithelium (RPE) cells.</text>
</comment>
<comment type="subunit">
    <text evidence="1">Monomer. Interacts with LRP5; the interaction prevents LRP5 from forming aggregates and chaperones LRP6 to the plasma membrane. Interacts with LRP6; the interaction prevents LRP6 from forming aggregates and chaperones LRP6 to the plasma membrane. Interacts with LRP4; the interaction promotes glycosylation of LRP4 and its cell-surface expression.</text>
</comment>
<comment type="subcellular location">
    <subcellularLocation>
        <location evidence="1">Endoplasmic reticulum</location>
    </subcellularLocation>
    <text evidence="1">Released from apoptotic cells and shed photoreceptor outer segments (By similarity).</text>
</comment>
<comment type="domain">
    <text evidence="1">The chaperone domain provides a folding template for proper folding of the beta-propeller (BP) domains of LRP5/6.</text>
</comment>
<comment type="domain">
    <text evidence="1">The escort domain ensures LRP5/6 safe-trafficking from the ER to the Golgi by preventing premature ligand-binding.</text>
</comment>
<comment type="similarity">
    <text evidence="4">Belongs to the MESD family.</text>
</comment>
<dbReference type="EMBL" id="CR860539">
    <property type="protein sequence ID" value="CAH92665.1"/>
    <property type="molecule type" value="mRNA"/>
</dbReference>
<dbReference type="RefSeq" id="NP_001127574.1">
    <property type="nucleotide sequence ID" value="NM_001134102.1"/>
</dbReference>
<dbReference type="SMR" id="Q5R6F1"/>
<dbReference type="FunCoup" id="Q5R6F1">
    <property type="interactions" value="2080"/>
</dbReference>
<dbReference type="STRING" id="9601.ENSPPYP00000007624"/>
<dbReference type="GlyCosmos" id="Q5R6F1">
    <property type="glycosylation" value="1 site, No reported glycans"/>
</dbReference>
<dbReference type="GeneID" id="100174652"/>
<dbReference type="KEGG" id="pon:100174652"/>
<dbReference type="CTD" id="23184"/>
<dbReference type="eggNOG" id="KOG4357">
    <property type="taxonomic scope" value="Eukaryota"/>
</dbReference>
<dbReference type="InParanoid" id="Q5R6F1"/>
<dbReference type="OrthoDB" id="75833at2759"/>
<dbReference type="Proteomes" id="UP000001595">
    <property type="component" value="Unplaced"/>
</dbReference>
<dbReference type="GO" id="GO:0005783">
    <property type="term" value="C:endoplasmic reticulum"/>
    <property type="evidence" value="ECO:0007669"/>
    <property type="project" value="UniProtKB-SubCell"/>
</dbReference>
<dbReference type="GO" id="GO:0050750">
    <property type="term" value="F:low-density lipoprotein particle receptor binding"/>
    <property type="evidence" value="ECO:0007669"/>
    <property type="project" value="TreeGrafter"/>
</dbReference>
<dbReference type="GO" id="GO:0006909">
    <property type="term" value="P:phagocytosis"/>
    <property type="evidence" value="ECO:0000250"/>
    <property type="project" value="UniProtKB"/>
</dbReference>
<dbReference type="GO" id="GO:1904395">
    <property type="term" value="P:positive regulation of skeletal muscle acetylcholine-gated channel clustering"/>
    <property type="evidence" value="ECO:0000250"/>
    <property type="project" value="UniProtKB"/>
</dbReference>
<dbReference type="GO" id="GO:0006457">
    <property type="term" value="P:protein folding"/>
    <property type="evidence" value="ECO:0000250"/>
    <property type="project" value="UniProtKB"/>
</dbReference>
<dbReference type="GO" id="GO:0034394">
    <property type="term" value="P:protein localization to cell surface"/>
    <property type="evidence" value="ECO:0000250"/>
    <property type="project" value="UniProtKB"/>
</dbReference>
<dbReference type="GO" id="GO:0016055">
    <property type="term" value="P:Wnt signaling pathway"/>
    <property type="evidence" value="ECO:0007669"/>
    <property type="project" value="UniProtKB-KW"/>
</dbReference>
<dbReference type="FunFam" id="3.30.70.260:FF:000031">
    <property type="entry name" value="LDLR chaperone MESD"/>
    <property type="match status" value="1"/>
</dbReference>
<dbReference type="Gene3D" id="3.30.70.260">
    <property type="match status" value="1"/>
</dbReference>
<dbReference type="Gene3D" id="6.10.250.640">
    <property type="match status" value="1"/>
</dbReference>
<dbReference type="InterPro" id="IPR019330">
    <property type="entry name" value="MESD"/>
</dbReference>
<dbReference type="PANTHER" id="PTHR17600:SF2">
    <property type="entry name" value="LRP CHAPERONE MESD"/>
    <property type="match status" value="1"/>
</dbReference>
<dbReference type="PANTHER" id="PTHR17600">
    <property type="entry name" value="MESODERM DEVELOPMENT CANDIDATE 2"/>
    <property type="match status" value="1"/>
</dbReference>
<dbReference type="Pfam" id="PF10185">
    <property type="entry name" value="Mesd"/>
    <property type="match status" value="1"/>
</dbReference>
<gene>
    <name type="primary">MESD</name>
    <name type="synonym">MESDC2</name>
</gene>